<protein>
    <recommendedName>
        <fullName evidence="1">UDP-N-acetylglucosamine 1-carboxyvinyltransferase</fullName>
        <ecNumber evidence="1">2.5.1.7</ecNumber>
    </recommendedName>
    <alternativeName>
        <fullName evidence="1">Enoylpyruvate transferase</fullName>
    </alternativeName>
    <alternativeName>
        <fullName evidence="1">UDP-N-acetylglucosamine enolpyruvyl transferase</fullName>
        <shortName evidence="1">EPT</shortName>
    </alternativeName>
</protein>
<dbReference type="EC" id="2.5.1.7" evidence="1"/>
<dbReference type="EMBL" id="AL954747">
    <property type="protein sequence ID" value="CAD85763.1"/>
    <property type="molecule type" value="Genomic_DNA"/>
</dbReference>
<dbReference type="RefSeq" id="WP_011112390.1">
    <property type="nucleotide sequence ID" value="NC_004757.1"/>
</dbReference>
<dbReference type="SMR" id="Q82TN2"/>
<dbReference type="STRING" id="228410.NE1852"/>
<dbReference type="GeneID" id="87105011"/>
<dbReference type="KEGG" id="neu:NE1852"/>
<dbReference type="eggNOG" id="COG0766">
    <property type="taxonomic scope" value="Bacteria"/>
</dbReference>
<dbReference type="HOGENOM" id="CLU_027387_0_0_4"/>
<dbReference type="OrthoDB" id="9803760at2"/>
<dbReference type="PhylomeDB" id="Q82TN2"/>
<dbReference type="UniPathway" id="UPA00219"/>
<dbReference type="Proteomes" id="UP000001416">
    <property type="component" value="Chromosome"/>
</dbReference>
<dbReference type="GO" id="GO:0005737">
    <property type="term" value="C:cytoplasm"/>
    <property type="evidence" value="ECO:0007669"/>
    <property type="project" value="UniProtKB-SubCell"/>
</dbReference>
<dbReference type="GO" id="GO:0008760">
    <property type="term" value="F:UDP-N-acetylglucosamine 1-carboxyvinyltransferase activity"/>
    <property type="evidence" value="ECO:0007669"/>
    <property type="project" value="UniProtKB-UniRule"/>
</dbReference>
<dbReference type="GO" id="GO:0051301">
    <property type="term" value="P:cell division"/>
    <property type="evidence" value="ECO:0007669"/>
    <property type="project" value="UniProtKB-KW"/>
</dbReference>
<dbReference type="GO" id="GO:0071555">
    <property type="term" value="P:cell wall organization"/>
    <property type="evidence" value="ECO:0007669"/>
    <property type="project" value="UniProtKB-KW"/>
</dbReference>
<dbReference type="GO" id="GO:0009252">
    <property type="term" value="P:peptidoglycan biosynthetic process"/>
    <property type="evidence" value="ECO:0007669"/>
    <property type="project" value="UniProtKB-UniRule"/>
</dbReference>
<dbReference type="GO" id="GO:0008360">
    <property type="term" value="P:regulation of cell shape"/>
    <property type="evidence" value="ECO:0007669"/>
    <property type="project" value="UniProtKB-KW"/>
</dbReference>
<dbReference type="GO" id="GO:0019277">
    <property type="term" value="P:UDP-N-acetylgalactosamine biosynthetic process"/>
    <property type="evidence" value="ECO:0007669"/>
    <property type="project" value="InterPro"/>
</dbReference>
<dbReference type="CDD" id="cd01555">
    <property type="entry name" value="UdpNAET"/>
    <property type="match status" value="1"/>
</dbReference>
<dbReference type="FunFam" id="3.65.10.10:FF:000001">
    <property type="entry name" value="UDP-N-acetylglucosamine 1-carboxyvinyltransferase"/>
    <property type="match status" value="1"/>
</dbReference>
<dbReference type="Gene3D" id="3.65.10.10">
    <property type="entry name" value="Enolpyruvate transferase domain"/>
    <property type="match status" value="2"/>
</dbReference>
<dbReference type="HAMAP" id="MF_00111">
    <property type="entry name" value="MurA"/>
    <property type="match status" value="1"/>
</dbReference>
<dbReference type="InterPro" id="IPR001986">
    <property type="entry name" value="Enolpyruvate_Tfrase_dom"/>
</dbReference>
<dbReference type="InterPro" id="IPR036968">
    <property type="entry name" value="Enolpyruvate_Tfrase_sf"/>
</dbReference>
<dbReference type="InterPro" id="IPR050068">
    <property type="entry name" value="MurA_subfamily"/>
</dbReference>
<dbReference type="InterPro" id="IPR013792">
    <property type="entry name" value="RNA3'P_cycl/enolpyr_Trfase_a/b"/>
</dbReference>
<dbReference type="InterPro" id="IPR005750">
    <property type="entry name" value="UDP_GlcNAc_COvinyl_MurA"/>
</dbReference>
<dbReference type="NCBIfam" id="TIGR01072">
    <property type="entry name" value="murA"/>
    <property type="match status" value="1"/>
</dbReference>
<dbReference type="NCBIfam" id="NF006873">
    <property type="entry name" value="PRK09369.1"/>
    <property type="match status" value="1"/>
</dbReference>
<dbReference type="PANTHER" id="PTHR43783">
    <property type="entry name" value="UDP-N-ACETYLGLUCOSAMINE 1-CARBOXYVINYLTRANSFERASE"/>
    <property type="match status" value="1"/>
</dbReference>
<dbReference type="PANTHER" id="PTHR43783:SF1">
    <property type="entry name" value="UDP-N-ACETYLGLUCOSAMINE 1-CARBOXYVINYLTRANSFERASE"/>
    <property type="match status" value="1"/>
</dbReference>
<dbReference type="Pfam" id="PF00275">
    <property type="entry name" value="EPSP_synthase"/>
    <property type="match status" value="1"/>
</dbReference>
<dbReference type="SUPFAM" id="SSF55205">
    <property type="entry name" value="EPT/RTPC-like"/>
    <property type="match status" value="1"/>
</dbReference>
<organism>
    <name type="scientific">Nitrosomonas europaea (strain ATCC 19718 / CIP 103999 / KCTC 2705 / NBRC 14298)</name>
    <dbReference type="NCBI Taxonomy" id="228410"/>
    <lineage>
        <taxon>Bacteria</taxon>
        <taxon>Pseudomonadati</taxon>
        <taxon>Pseudomonadota</taxon>
        <taxon>Betaproteobacteria</taxon>
        <taxon>Nitrosomonadales</taxon>
        <taxon>Nitrosomonadaceae</taxon>
        <taxon>Nitrosomonas</taxon>
    </lineage>
</organism>
<keyword id="KW-0131">Cell cycle</keyword>
<keyword id="KW-0132">Cell division</keyword>
<keyword id="KW-0133">Cell shape</keyword>
<keyword id="KW-0961">Cell wall biogenesis/degradation</keyword>
<keyword id="KW-0963">Cytoplasm</keyword>
<keyword id="KW-0573">Peptidoglycan synthesis</keyword>
<keyword id="KW-0670">Pyruvate</keyword>
<keyword id="KW-1185">Reference proteome</keyword>
<keyword id="KW-0808">Transferase</keyword>
<feature type="chain" id="PRO_0000231228" description="UDP-N-acetylglucosamine 1-carboxyvinyltransferase">
    <location>
        <begin position="1"/>
        <end position="417"/>
    </location>
</feature>
<feature type="active site" description="Proton donor" evidence="1">
    <location>
        <position position="117"/>
    </location>
</feature>
<feature type="binding site" evidence="1">
    <location>
        <begin position="22"/>
        <end position="23"/>
    </location>
    <ligand>
        <name>phosphoenolpyruvate</name>
        <dbReference type="ChEBI" id="CHEBI:58702"/>
    </ligand>
</feature>
<feature type="binding site" evidence="1">
    <location>
        <position position="93"/>
    </location>
    <ligand>
        <name>UDP-N-acetyl-alpha-D-glucosamine</name>
        <dbReference type="ChEBI" id="CHEBI:57705"/>
    </ligand>
</feature>
<feature type="binding site" evidence="1">
    <location>
        <begin position="122"/>
        <end position="126"/>
    </location>
    <ligand>
        <name>UDP-N-acetyl-alpha-D-glucosamine</name>
        <dbReference type="ChEBI" id="CHEBI:57705"/>
    </ligand>
</feature>
<feature type="binding site" evidence="1">
    <location>
        <position position="305"/>
    </location>
    <ligand>
        <name>UDP-N-acetyl-alpha-D-glucosamine</name>
        <dbReference type="ChEBI" id="CHEBI:57705"/>
    </ligand>
</feature>
<feature type="binding site" evidence="1">
    <location>
        <position position="327"/>
    </location>
    <ligand>
        <name>UDP-N-acetyl-alpha-D-glucosamine</name>
        <dbReference type="ChEBI" id="CHEBI:57705"/>
    </ligand>
</feature>
<feature type="modified residue" description="2-(S-cysteinyl)pyruvic acid O-phosphothioketal" evidence="1">
    <location>
        <position position="117"/>
    </location>
</feature>
<comment type="function">
    <text evidence="1">Cell wall formation. Adds enolpyruvyl to UDP-N-acetylglucosamine.</text>
</comment>
<comment type="catalytic activity">
    <reaction evidence="1">
        <text>phosphoenolpyruvate + UDP-N-acetyl-alpha-D-glucosamine = UDP-N-acetyl-3-O-(1-carboxyvinyl)-alpha-D-glucosamine + phosphate</text>
        <dbReference type="Rhea" id="RHEA:18681"/>
        <dbReference type="ChEBI" id="CHEBI:43474"/>
        <dbReference type="ChEBI" id="CHEBI:57705"/>
        <dbReference type="ChEBI" id="CHEBI:58702"/>
        <dbReference type="ChEBI" id="CHEBI:68483"/>
        <dbReference type="EC" id="2.5.1.7"/>
    </reaction>
</comment>
<comment type="pathway">
    <text evidence="1">Cell wall biogenesis; peptidoglycan biosynthesis.</text>
</comment>
<comment type="subcellular location">
    <subcellularLocation>
        <location evidence="1">Cytoplasm</location>
    </subcellularLocation>
</comment>
<comment type="similarity">
    <text evidence="1">Belongs to the EPSP synthase family. MurA subfamily.</text>
</comment>
<evidence type="ECO:0000255" key="1">
    <source>
        <dbReference type="HAMAP-Rule" id="MF_00111"/>
    </source>
</evidence>
<name>MURA_NITEU</name>
<proteinExistence type="inferred from homology"/>
<gene>
    <name evidence="1" type="primary">murA</name>
    <name type="ordered locus">NE1852</name>
</gene>
<reference key="1">
    <citation type="journal article" date="2003" name="J. Bacteriol.">
        <title>Complete genome sequence of the ammonia-oxidizing bacterium and obligate chemolithoautotroph Nitrosomonas europaea.</title>
        <authorList>
            <person name="Chain P."/>
            <person name="Lamerdin J.E."/>
            <person name="Larimer F.W."/>
            <person name="Regala W."/>
            <person name="Lao V."/>
            <person name="Land M.L."/>
            <person name="Hauser L."/>
            <person name="Hooper A.B."/>
            <person name="Klotz M.G."/>
            <person name="Norton J."/>
            <person name="Sayavedra-Soto L.A."/>
            <person name="Arciero D.M."/>
            <person name="Hommes N.G."/>
            <person name="Whittaker M.M."/>
            <person name="Arp D.J."/>
        </authorList>
    </citation>
    <scope>NUCLEOTIDE SEQUENCE [LARGE SCALE GENOMIC DNA]</scope>
    <source>
        <strain>ATCC 19718 / CIP 103999 / KCTC 2705 / NBRC 14298</strain>
    </source>
</reference>
<sequence>MQKLVIHGGAKLQGEISISGAKNAALPVLCASLLTADTFTIQNLPHLRDITTMLALLEQIGVRILTNDPGTAELSAASITNPTASYDMVKTMRAAILVLGPLLARTGQAYISLPGGCAIGMRPVDQHIKGLQAMGADISIEQGYIRAQAGRLSGTRIVMDLVTVTGTENLMMAATLASGTTILENAAREPEVVDLADCLIGMGAKIEGAGSDIIVIEGVDHLHGSSHTVMPDRIETGTFLTAVAACGGDITLTRTRADTLDVVLGKLIETGAAIDTGEDWIRLRMQHRPQPVSLRTAPYPAFPTDMQAQFMALNSIADGTSVMTETIFENRFMHVQELKRLNADIQVEGNTAIVHGIPQLDGASVMATDLRASACLIIAGLVAQGETIVDRIYHLDRGYERIERKLAQAGAQIKRIN</sequence>
<accession>Q82TN2</accession>